<dbReference type="EC" id="4.1.2.4" evidence="1"/>
<dbReference type="EMBL" id="AM180355">
    <property type="protein sequence ID" value="CAJ68366.1"/>
    <property type="molecule type" value="Genomic_DNA"/>
</dbReference>
<dbReference type="RefSeq" id="WP_003439345.1">
    <property type="nucleotide sequence ID" value="NZ_JAUPES010000019.1"/>
</dbReference>
<dbReference type="RefSeq" id="YP_001088002.1">
    <property type="nucleotide sequence ID" value="NC_009089.1"/>
</dbReference>
<dbReference type="SMR" id="Q18C22"/>
<dbReference type="STRING" id="272563.CD630_15020"/>
<dbReference type="EnsemblBacteria" id="CAJ68366">
    <property type="protein sequence ID" value="CAJ68366"/>
    <property type="gene ID" value="CD630_15020"/>
</dbReference>
<dbReference type="GeneID" id="66353908"/>
<dbReference type="KEGG" id="cdf:CD630_15020"/>
<dbReference type="KEGG" id="pdc:CDIF630_01667"/>
<dbReference type="PATRIC" id="fig|272563.120.peg.1571"/>
<dbReference type="eggNOG" id="COG0274">
    <property type="taxonomic scope" value="Bacteria"/>
</dbReference>
<dbReference type="OrthoDB" id="9778711at2"/>
<dbReference type="PhylomeDB" id="Q18C22"/>
<dbReference type="BioCyc" id="PDIF272563:G12WB-1637-MONOMER"/>
<dbReference type="UniPathway" id="UPA00002">
    <property type="reaction ID" value="UER00468"/>
</dbReference>
<dbReference type="Proteomes" id="UP000001978">
    <property type="component" value="Chromosome"/>
</dbReference>
<dbReference type="GO" id="GO:0005737">
    <property type="term" value="C:cytoplasm"/>
    <property type="evidence" value="ECO:0007669"/>
    <property type="project" value="UniProtKB-SubCell"/>
</dbReference>
<dbReference type="GO" id="GO:0004139">
    <property type="term" value="F:deoxyribose-phosphate aldolase activity"/>
    <property type="evidence" value="ECO:0007669"/>
    <property type="project" value="UniProtKB-UniRule"/>
</dbReference>
<dbReference type="GO" id="GO:0006018">
    <property type="term" value="P:2-deoxyribose 1-phosphate catabolic process"/>
    <property type="evidence" value="ECO:0007669"/>
    <property type="project" value="UniProtKB-UniRule"/>
</dbReference>
<dbReference type="GO" id="GO:0016052">
    <property type="term" value="P:carbohydrate catabolic process"/>
    <property type="evidence" value="ECO:0007669"/>
    <property type="project" value="TreeGrafter"/>
</dbReference>
<dbReference type="GO" id="GO:0009264">
    <property type="term" value="P:deoxyribonucleotide catabolic process"/>
    <property type="evidence" value="ECO:0007669"/>
    <property type="project" value="InterPro"/>
</dbReference>
<dbReference type="CDD" id="cd00959">
    <property type="entry name" value="DeoC"/>
    <property type="match status" value="1"/>
</dbReference>
<dbReference type="FunFam" id="3.20.20.70:FF:000044">
    <property type="entry name" value="Deoxyribose-phosphate aldolase"/>
    <property type="match status" value="1"/>
</dbReference>
<dbReference type="Gene3D" id="3.20.20.70">
    <property type="entry name" value="Aldolase class I"/>
    <property type="match status" value="1"/>
</dbReference>
<dbReference type="HAMAP" id="MF_00114">
    <property type="entry name" value="DeoC_type1"/>
    <property type="match status" value="1"/>
</dbReference>
<dbReference type="InterPro" id="IPR013785">
    <property type="entry name" value="Aldolase_TIM"/>
</dbReference>
<dbReference type="InterPro" id="IPR011343">
    <property type="entry name" value="DeoC"/>
</dbReference>
<dbReference type="InterPro" id="IPR002915">
    <property type="entry name" value="DeoC/FbaB/LacD_aldolase"/>
</dbReference>
<dbReference type="InterPro" id="IPR028581">
    <property type="entry name" value="DeoC_typeI"/>
</dbReference>
<dbReference type="NCBIfam" id="TIGR00126">
    <property type="entry name" value="deoC"/>
    <property type="match status" value="1"/>
</dbReference>
<dbReference type="PANTHER" id="PTHR10889">
    <property type="entry name" value="DEOXYRIBOSE-PHOSPHATE ALDOLASE"/>
    <property type="match status" value="1"/>
</dbReference>
<dbReference type="PANTHER" id="PTHR10889:SF1">
    <property type="entry name" value="DEOXYRIBOSE-PHOSPHATE ALDOLASE"/>
    <property type="match status" value="1"/>
</dbReference>
<dbReference type="Pfam" id="PF01791">
    <property type="entry name" value="DeoC"/>
    <property type="match status" value="1"/>
</dbReference>
<dbReference type="PIRSF" id="PIRSF001357">
    <property type="entry name" value="DeoC"/>
    <property type="match status" value="1"/>
</dbReference>
<dbReference type="SMART" id="SM01133">
    <property type="entry name" value="DeoC"/>
    <property type="match status" value="1"/>
</dbReference>
<dbReference type="SUPFAM" id="SSF51569">
    <property type="entry name" value="Aldolase"/>
    <property type="match status" value="1"/>
</dbReference>
<accession>Q18C22</accession>
<keyword id="KW-0963">Cytoplasm</keyword>
<keyword id="KW-0456">Lyase</keyword>
<keyword id="KW-1185">Reference proteome</keyword>
<keyword id="KW-0704">Schiff base</keyword>
<organism>
    <name type="scientific">Clostridioides difficile (strain 630)</name>
    <name type="common">Peptoclostridium difficile</name>
    <dbReference type="NCBI Taxonomy" id="272563"/>
    <lineage>
        <taxon>Bacteria</taxon>
        <taxon>Bacillati</taxon>
        <taxon>Bacillota</taxon>
        <taxon>Clostridia</taxon>
        <taxon>Peptostreptococcales</taxon>
        <taxon>Peptostreptococcaceae</taxon>
        <taxon>Clostridioides</taxon>
    </lineage>
</organism>
<evidence type="ECO:0000255" key="1">
    <source>
        <dbReference type="HAMAP-Rule" id="MF_00114"/>
    </source>
</evidence>
<reference key="1">
    <citation type="journal article" date="2006" name="Nat. Genet.">
        <title>The multidrug-resistant human pathogen Clostridium difficile has a highly mobile, mosaic genome.</title>
        <authorList>
            <person name="Sebaihia M."/>
            <person name="Wren B.W."/>
            <person name="Mullany P."/>
            <person name="Fairweather N.F."/>
            <person name="Minton N."/>
            <person name="Stabler R."/>
            <person name="Thomson N.R."/>
            <person name="Roberts A.P."/>
            <person name="Cerdeno-Tarraga A.M."/>
            <person name="Wang H."/>
            <person name="Holden M.T.G."/>
            <person name="Wright A."/>
            <person name="Churcher C."/>
            <person name="Quail M.A."/>
            <person name="Baker S."/>
            <person name="Bason N."/>
            <person name="Brooks K."/>
            <person name="Chillingworth T."/>
            <person name="Cronin A."/>
            <person name="Davis P."/>
            <person name="Dowd L."/>
            <person name="Fraser A."/>
            <person name="Feltwell T."/>
            <person name="Hance Z."/>
            <person name="Holroyd S."/>
            <person name="Jagels K."/>
            <person name="Moule S."/>
            <person name="Mungall K."/>
            <person name="Price C."/>
            <person name="Rabbinowitsch E."/>
            <person name="Sharp S."/>
            <person name="Simmonds M."/>
            <person name="Stevens K."/>
            <person name="Unwin L."/>
            <person name="Whithead S."/>
            <person name="Dupuy B."/>
            <person name="Dougan G."/>
            <person name="Barrell B."/>
            <person name="Parkhill J."/>
        </authorList>
    </citation>
    <scope>NUCLEOTIDE SEQUENCE [LARGE SCALE GENOMIC DNA]</scope>
    <source>
        <strain>630</strain>
    </source>
</reference>
<comment type="function">
    <text evidence="1">Catalyzes a reversible aldol reaction between acetaldehyde and D-glyceraldehyde 3-phosphate to generate 2-deoxy-D-ribose 5-phosphate.</text>
</comment>
<comment type="catalytic activity">
    <reaction evidence="1">
        <text>2-deoxy-D-ribose 5-phosphate = D-glyceraldehyde 3-phosphate + acetaldehyde</text>
        <dbReference type="Rhea" id="RHEA:12821"/>
        <dbReference type="ChEBI" id="CHEBI:15343"/>
        <dbReference type="ChEBI" id="CHEBI:59776"/>
        <dbReference type="ChEBI" id="CHEBI:62877"/>
        <dbReference type="EC" id="4.1.2.4"/>
    </reaction>
</comment>
<comment type="pathway">
    <text evidence="1">Carbohydrate degradation; 2-deoxy-D-ribose 1-phosphate degradation; D-glyceraldehyde 3-phosphate and acetaldehyde from 2-deoxy-alpha-D-ribose 1-phosphate: step 2/2.</text>
</comment>
<comment type="subcellular location">
    <subcellularLocation>
        <location evidence="1">Cytoplasm</location>
    </subcellularLocation>
</comment>
<comment type="similarity">
    <text evidence="1">Belongs to the DeoC/FbaB aldolase family. DeoC type 1 subfamily.</text>
</comment>
<sequence length="219" mass="23995">MKHILKTVDHTILKATTTWEDIKILCDEAVDMSVASVCIPPSYVKRASEYLKGKIKICTVIGFPLGYQTTATKVFEAKDAIENGADEVDMVVNISDIKNKDYDNIGKEIKEIKKAIGDKVLKVIIETCYLDEDEKIKMCEIVTMSGSDFIKTSTGMGTGGATLEDIKLMKEHVGKNVKIKAAGGVKSISDAEKFIEAGAERLGTSSICKILKNEDTTDY</sequence>
<gene>
    <name evidence="1" type="primary">deoC</name>
    <name type="ordered locus">CD630_15020</name>
</gene>
<feature type="chain" id="PRO_1000076027" description="Deoxyribose-phosphate aldolase">
    <location>
        <begin position="1"/>
        <end position="219"/>
    </location>
</feature>
<feature type="active site" description="Proton donor/acceptor" evidence="1">
    <location>
        <position position="89"/>
    </location>
</feature>
<feature type="active site" description="Schiff-base intermediate with acetaldehyde" evidence="1">
    <location>
        <position position="151"/>
    </location>
</feature>
<feature type="active site" description="Proton donor/acceptor" evidence="1">
    <location>
        <position position="180"/>
    </location>
</feature>
<proteinExistence type="inferred from homology"/>
<name>DEOC_CLOD6</name>
<protein>
    <recommendedName>
        <fullName evidence="1">Deoxyribose-phosphate aldolase</fullName>
        <shortName evidence="1">DERA</shortName>
        <ecNumber evidence="1">4.1.2.4</ecNumber>
    </recommendedName>
    <alternativeName>
        <fullName evidence="1">2-deoxy-D-ribose 5-phosphate aldolase</fullName>
    </alternativeName>
    <alternativeName>
        <fullName evidence="1">Phosphodeoxyriboaldolase</fullName>
        <shortName evidence="1">Deoxyriboaldolase</shortName>
    </alternativeName>
</protein>